<protein>
    <recommendedName>
        <fullName>77 kDa membrane protein</fullName>
    </recommendedName>
</protein>
<gene>
    <name type="ordered locus">SACOL2002</name>
</gene>
<sequence length="684" mass="77059">MKFKSLITTTLALGVLASTGANFNNNEASAAAKPLDKSSSSLHHGYSKVHVPYAITVNGTSQNILSSLTFNKNQNISYKDLEDRVKSVLKSDRGISDIDLRLSKQAKYTVYFKNGTKKVIDLKAGIYTADLINTSEIKAININVDTKKQVEDKKKDKANYQVPYTITVNGTSQNILSNLTFNKNQNISYKDLEDKVKSVLESNRGITDVDLRLSKQAKYTVNFKNGTKKVIDLKSGIYTANLINSSDIKSININVDTKKHIENKAKRNYQVPYSINLNGTSTNILSNLSFSNKPWTNYKNLTSQIKSVLKHDRGISEQDLKYAKKAYYTVYFKNGGKRILQLNSKNYTANLVHAKDVKRIEITVKTGTKAKADRYVPYTIAVNGTSTPILSDLKFTGDPRVGYKDISKKVKSVLKHDRGIGERELKYAKKATYTVHFKNGTKKVININSNISQLNLLYVQDIKKIDIDVKTGTKAKADSYVPYTIAVNGTSTPILSKLKISNKQLISYKYLNDKVKSVLKSERGISDLDLKFAKQAKYTVYFKNGKKQVVNLKSDIFTPNLFSAKDIKKIDIDVKQYTKSKKNNKSNNVKFPVTINKFENIVSNEFVFYNASKITINDLSIKLKSAMANDQGITKHDIGLAERAVYKVYFKNGSSKYVDLKTEYKDERVFKATDIKKVDIELKF</sequence>
<name>OMP7_STAAC</name>
<accession>Q5HEI2</accession>
<reference key="1">
    <citation type="journal article" date="2005" name="J. Bacteriol.">
        <title>Insights on evolution of virulence and resistance from the complete genome analysis of an early methicillin-resistant Staphylococcus aureus strain and a biofilm-producing methicillin-resistant Staphylococcus epidermidis strain.</title>
        <authorList>
            <person name="Gill S.R."/>
            <person name="Fouts D.E."/>
            <person name="Archer G.L."/>
            <person name="Mongodin E.F."/>
            <person name="DeBoy R.T."/>
            <person name="Ravel J."/>
            <person name="Paulsen I.T."/>
            <person name="Kolonay J.F."/>
            <person name="Brinkac L.M."/>
            <person name="Beanan M.J."/>
            <person name="Dodson R.J."/>
            <person name="Daugherty S.C."/>
            <person name="Madupu R."/>
            <person name="Angiuoli S.V."/>
            <person name="Durkin A.S."/>
            <person name="Haft D.H."/>
            <person name="Vamathevan J.J."/>
            <person name="Khouri H."/>
            <person name="Utterback T.R."/>
            <person name="Lee C."/>
            <person name="Dimitrov G."/>
            <person name="Jiang L."/>
            <person name="Qin H."/>
            <person name="Weidman J."/>
            <person name="Tran K."/>
            <person name="Kang K.H."/>
            <person name="Hance I.R."/>
            <person name="Nelson K.E."/>
            <person name="Fraser C.M."/>
        </authorList>
    </citation>
    <scope>NUCLEOTIDE SEQUENCE [LARGE SCALE GENOMIC DNA]</scope>
    <source>
        <strain>COL</strain>
    </source>
</reference>
<reference key="2">
    <citation type="journal article" date="1989" name="Nucleic Acids Res.">
        <title>Nucleotide sequence: the beta-hemolysin gene of Staphylococcus aureus.</title>
        <authorList>
            <person name="Projan S.J."/>
            <person name="Kornblum J."/>
            <person name="Kreiswirth B."/>
            <person name="Moghazeh S.L."/>
            <person name="Eisner W."/>
            <person name="Novick R.P."/>
        </authorList>
    </citation>
    <scope>NUCLEOTIDE SEQUENCE [GENOMIC DNA] OF 1-121</scope>
</reference>
<keyword id="KW-1003">Cell membrane</keyword>
<keyword id="KW-0472">Membrane</keyword>
<keyword id="KW-0677">Repeat</keyword>
<keyword id="KW-0732">Signal</keyword>
<proteinExistence type="inferred from homology"/>
<organism>
    <name type="scientific">Staphylococcus aureus (strain COL)</name>
    <dbReference type="NCBI Taxonomy" id="93062"/>
    <lineage>
        <taxon>Bacteria</taxon>
        <taxon>Bacillati</taxon>
        <taxon>Bacillota</taxon>
        <taxon>Bacilli</taxon>
        <taxon>Bacillales</taxon>
        <taxon>Staphylococcaceae</taxon>
        <taxon>Staphylococcus</taxon>
    </lineage>
</organism>
<feature type="signal peptide" evidence="2">
    <location>
        <begin position="1"/>
        <end position="30"/>
    </location>
</feature>
<feature type="chain" id="PRO_0000021892" description="77 kDa membrane protein">
    <location>
        <begin position="31"/>
        <end position="684"/>
    </location>
</feature>
<feature type="repeat" description="MAP 1">
    <location>
        <begin position="45"/>
        <end position="154"/>
    </location>
</feature>
<feature type="repeat" description="MAP 2">
    <location>
        <begin position="156"/>
        <end position="265"/>
    </location>
</feature>
<feature type="repeat" description="MAP 3">
    <location>
        <begin position="266"/>
        <end position="374"/>
    </location>
</feature>
<feature type="repeat" description="MAP 4">
    <location>
        <begin position="375"/>
        <end position="474"/>
    </location>
</feature>
<feature type="repeat" description="MAP 5">
    <location>
        <begin position="475"/>
        <end position="584"/>
    </location>
</feature>
<feature type="repeat" description="MAP 6">
    <location>
        <begin position="586"/>
        <end position="684"/>
    </location>
</feature>
<evidence type="ECO:0000250" key="1"/>
<evidence type="ECO:0000255" key="2"/>
<comment type="function">
    <text evidence="1">Binds various plasma and ECM-proteins.</text>
</comment>
<comment type="subcellular location">
    <subcellularLocation>
        <location evidence="1">Cell membrane</location>
        <topology evidence="1">Peripheral membrane protein</topology>
    </subcellularLocation>
</comment>
<dbReference type="EMBL" id="CP000046">
    <property type="protein sequence ID" value="AAW36971.1"/>
    <property type="molecule type" value="Genomic_DNA"/>
</dbReference>
<dbReference type="EMBL" id="X13404">
    <property type="protein sequence ID" value="CAA31768.1"/>
    <property type="molecule type" value="Genomic_DNA"/>
</dbReference>
<dbReference type="PIR" id="S15765">
    <property type="entry name" value="S15765"/>
</dbReference>
<dbReference type="SMR" id="Q5HEI2"/>
<dbReference type="KEGG" id="sac:SACOL2002"/>
<dbReference type="HOGENOM" id="CLU_466842_0_0_9"/>
<dbReference type="Proteomes" id="UP000000530">
    <property type="component" value="Chromosome"/>
</dbReference>
<dbReference type="GO" id="GO:0005886">
    <property type="term" value="C:plasma membrane"/>
    <property type="evidence" value="ECO:0007669"/>
    <property type="project" value="UniProtKB-SubCell"/>
</dbReference>
<dbReference type="Gene3D" id="3.10.20.120">
    <property type="match status" value="6"/>
</dbReference>
<dbReference type="InterPro" id="IPR005298">
    <property type="entry name" value="MAP_dom"/>
</dbReference>
<dbReference type="Pfam" id="PF03642">
    <property type="entry name" value="MAP"/>
    <property type="match status" value="6"/>
</dbReference>
<dbReference type="PROSITE" id="PS51223">
    <property type="entry name" value="MAP"/>
    <property type="match status" value="6"/>
</dbReference>